<comment type="function">
    <text evidence="2 4 5 6">Binds and inhibits CYCD2-1/CDKA-1 complex kinase activity. Regulates cell division which is crucial for plant growth, development and morphogenesis. May regulate early lateral root initiation by blocking the G1/S phase transition. Controls the mitosis-to-endocycle transition and the onset of the endoreduplication cycle during leaf development through inhibition of mitotic CDKA-1 kinase complexes. Specifically targets CDKA-1.</text>
</comment>
<comment type="subunit">
    <text evidence="1 2 5">Specifically interacts with CDKA-1, but not with CDKB1-1.</text>
</comment>
<comment type="interaction">
    <interactant intactId="EBI-1636748">
        <id>Q9SCR2</id>
    </interactant>
    <interactant intactId="EBI-371713">
        <id>P24100</id>
        <label>CDKA-1</label>
    </interactant>
    <organismsDiffer>false</organismsDiffer>
    <experiments>6</experiments>
</comment>
<comment type="subcellular location">
    <subcellularLocation>
        <location evidence="7">Nucleus</location>
        <location evidence="7">Nucleoplasm</location>
    </subcellularLocation>
    <text>Homogeneously distributed.</text>
</comment>
<comment type="developmental stage">
    <text evidence="3 4 5">Highly expressed in root pericycle and cell suspension culture during cell cycle arrest. Expressed early in the G1 phase and then disappears. More abundant in endoreduplicating than in mitotically dividing tissues (at protein level).</text>
</comment>
<comment type="induction">
    <text evidence="4">Down-regulated by auxin in roots.</text>
</comment>
<comment type="PTM">
    <text evidence="5">Phosphorylated.</text>
</comment>
<comment type="miscellaneous">
    <text>Treatment with auxin induces lateral root initiation. ICK2/KRP2 protein abundance is regulated post-transcriptionally through CDK phosphorylation and proteasomal degradation.</text>
</comment>
<comment type="similarity">
    <text evidence="8">Belongs to the CDI family. ICK/KRP subfamily.</text>
</comment>
<accession>Q9SCR2</accession>
<keyword id="KW-0131">Cell cycle</keyword>
<keyword id="KW-0539">Nucleus</keyword>
<keyword id="KW-0597">Phosphoprotein</keyword>
<keyword id="KW-0649">Protein kinase inhibitor</keyword>
<keyword id="KW-1185">Reference proteome</keyword>
<dbReference type="EMBL" id="AJ251851">
    <property type="protein sequence ID" value="CAB76424.1"/>
    <property type="molecule type" value="mRNA"/>
</dbReference>
<dbReference type="EMBL" id="AL132979">
    <property type="protein sequence ID" value="CAB62432.1"/>
    <property type="molecule type" value="Genomic_DNA"/>
</dbReference>
<dbReference type="EMBL" id="CP002686">
    <property type="protein sequence ID" value="AEE78687.1"/>
    <property type="molecule type" value="Genomic_DNA"/>
</dbReference>
<dbReference type="EMBL" id="AK176528">
    <property type="protein sequence ID" value="BAD44291.1"/>
    <property type="molecule type" value="mRNA"/>
</dbReference>
<dbReference type="EMBL" id="AK176728">
    <property type="protein sequence ID" value="BAD44491.1"/>
    <property type="molecule type" value="mRNA"/>
</dbReference>
<dbReference type="EMBL" id="BT028944">
    <property type="protein sequence ID" value="ABI49491.1"/>
    <property type="molecule type" value="mRNA"/>
</dbReference>
<dbReference type="EMBL" id="AY088290">
    <property type="protein sequence ID" value="AAM65829.1"/>
    <property type="molecule type" value="mRNA"/>
</dbReference>
<dbReference type="PIR" id="T46140">
    <property type="entry name" value="T46140"/>
</dbReference>
<dbReference type="RefSeq" id="NP_190632.1">
    <property type="nucleotide sequence ID" value="NM_114923.4"/>
</dbReference>
<dbReference type="BioGRID" id="9544">
    <property type="interactions" value="42"/>
</dbReference>
<dbReference type="FunCoup" id="Q9SCR2">
    <property type="interactions" value="58"/>
</dbReference>
<dbReference type="IntAct" id="Q9SCR2">
    <property type="interactions" value="29"/>
</dbReference>
<dbReference type="STRING" id="3702.Q9SCR2"/>
<dbReference type="PaxDb" id="3702-AT3G50630.1"/>
<dbReference type="ProteomicsDB" id="250709"/>
<dbReference type="EnsemblPlants" id="AT3G50630.1">
    <property type="protein sequence ID" value="AT3G50630.1"/>
    <property type="gene ID" value="AT3G50630"/>
</dbReference>
<dbReference type="GeneID" id="824226"/>
<dbReference type="Gramene" id="AT3G50630.1">
    <property type="protein sequence ID" value="AT3G50630.1"/>
    <property type="gene ID" value="AT3G50630"/>
</dbReference>
<dbReference type="KEGG" id="ath:AT3G50630"/>
<dbReference type="Araport" id="AT3G50630"/>
<dbReference type="TAIR" id="AT3G50630">
    <property type="gene designation" value="KRP2"/>
</dbReference>
<dbReference type="eggNOG" id="ENOG502R7BY">
    <property type="taxonomic scope" value="Eukaryota"/>
</dbReference>
<dbReference type="HOGENOM" id="CLU_110872_0_0_1"/>
<dbReference type="InParanoid" id="Q9SCR2"/>
<dbReference type="OMA" id="LECSMKY"/>
<dbReference type="OrthoDB" id="9940972at2759"/>
<dbReference type="PhylomeDB" id="Q9SCR2"/>
<dbReference type="PRO" id="PR:Q9SCR2"/>
<dbReference type="Proteomes" id="UP000006548">
    <property type="component" value="Chromosome 3"/>
</dbReference>
<dbReference type="ExpressionAtlas" id="Q9SCR2">
    <property type="expression patterns" value="baseline and differential"/>
</dbReference>
<dbReference type="GO" id="GO:0005654">
    <property type="term" value="C:nucleoplasm"/>
    <property type="evidence" value="ECO:0007669"/>
    <property type="project" value="UniProtKB-SubCell"/>
</dbReference>
<dbReference type="GO" id="GO:0004861">
    <property type="term" value="F:cyclin-dependent protein serine/threonine kinase inhibitor activity"/>
    <property type="evidence" value="ECO:0000316"/>
    <property type="project" value="TAIR"/>
</dbReference>
<dbReference type="GO" id="GO:0019210">
    <property type="term" value="F:kinase inhibitor activity"/>
    <property type="evidence" value="ECO:0000314"/>
    <property type="project" value="TAIR"/>
</dbReference>
<dbReference type="GO" id="GO:0042023">
    <property type="term" value="P:DNA endoreduplication"/>
    <property type="evidence" value="ECO:0000315"/>
    <property type="project" value="TAIR"/>
</dbReference>
<dbReference type="GO" id="GO:0045736">
    <property type="term" value="P:negative regulation of cyclin-dependent protein serine/threonine kinase activity"/>
    <property type="evidence" value="ECO:0000314"/>
    <property type="project" value="TAIR"/>
</dbReference>
<dbReference type="FunFam" id="4.10.365.10:FF:000007">
    <property type="entry name" value="Cyclin-dependent kinase inhibitor 2"/>
    <property type="match status" value="1"/>
</dbReference>
<dbReference type="Gene3D" id="4.10.365.10">
    <property type="entry name" value="p27"/>
    <property type="match status" value="1"/>
</dbReference>
<dbReference type="InterPro" id="IPR003175">
    <property type="entry name" value="CDI_dom"/>
</dbReference>
<dbReference type="InterPro" id="IPR044898">
    <property type="entry name" value="CDI_dom_sf"/>
</dbReference>
<dbReference type="InterPro" id="IPR044275">
    <property type="entry name" value="KRP"/>
</dbReference>
<dbReference type="PANTHER" id="PTHR46776">
    <property type="entry name" value="CYCLIN-DEPENDENT KINASE INHIBITOR 4-RELATED"/>
    <property type="match status" value="1"/>
</dbReference>
<dbReference type="Pfam" id="PF02234">
    <property type="entry name" value="CDI"/>
    <property type="match status" value="1"/>
</dbReference>
<dbReference type="PIRSF" id="PIRSF017811">
    <property type="entry name" value="CDK_inhib_pln"/>
    <property type="match status" value="1"/>
</dbReference>
<feature type="chain" id="PRO_0000294088" description="Cyclin-dependent kinase inhibitor 2">
    <location>
        <begin position="1"/>
        <end position="209"/>
    </location>
</feature>
<feature type="region of interest" description="Required for nuclear localization">
    <location>
        <begin position="1"/>
        <end position="32"/>
    </location>
</feature>
<proteinExistence type="evidence at protein level"/>
<protein>
    <recommendedName>
        <fullName>Cyclin-dependent kinase inhibitor 2</fullName>
    </recommendedName>
    <alternativeName>
        <fullName>Inhibitor/interactor of CDK protein 2</fullName>
    </alternativeName>
    <alternativeName>
        <fullName>KIP-related protein 2</fullName>
    </alternativeName>
</protein>
<gene>
    <name type="primary">KRP2</name>
    <name type="synonym">ICK2</name>
    <name type="ordered locus">At3g50630</name>
    <name type="ORF">T3A5.10</name>
</gene>
<evidence type="ECO:0000269" key="1">
    <source>
    </source>
</evidence>
<evidence type="ECO:0000269" key="2">
    <source>
    </source>
</evidence>
<evidence type="ECO:0000269" key="3">
    <source>
    </source>
</evidence>
<evidence type="ECO:0000269" key="4">
    <source>
    </source>
</evidence>
<evidence type="ECO:0000269" key="5">
    <source>
    </source>
</evidence>
<evidence type="ECO:0000269" key="6">
    <source>
    </source>
</evidence>
<evidence type="ECO:0000269" key="7">
    <source>
    </source>
</evidence>
<evidence type="ECO:0000305" key="8"/>
<organism>
    <name type="scientific">Arabidopsis thaliana</name>
    <name type="common">Mouse-ear cress</name>
    <dbReference type="NCBI Taxonomy" id="3702"/>
    <lineage>
        <taxon>Eukaryota</taxon>
        <taxon>Viridiplantae</taxon>
        <taxon>Streptophyta</taxon>
        <taxon>Embryophyta</taxon>
        <taxon>Tracheophyta</taxon>
        <taxon>Spermatophyta</taxon>
        <taxon>Magnoliopsida</taxon>
        <taxon>eudicotyledons</taxon>
        <taxon>Gunneridae</taxon>
        <taxon>Pentapetalae</taxon>
        <taxon>rosids</taxon>
        <taxon>malvids</taxon>
        <taxon>Brassicales</taxon>
        <taxon>Brassicaceae</taxon>
        <taxon>Camelineae</taxon>
        <taxon>Arabidopsis</taxon>
    </lineage>
</organism>
<reference key="1">
    <citation type="journal article" date="2000" name="Plant J.">
        <title>The Arabidopsis Cdc2a-interacting protein ICK2 is structurally related to ICK1 and is a potent inhibitor of cyclin-dependent kinase activity in vitro.</title>
        <authorList>
            <person name="Lui H."/>
            <person name="Wang H."/>
            <person name="Delong C."/>
            <person name="Fowke L.C."/>
            <person name="Crosby W.L."/>
            <person name="Fobert P.R."/>
        </authorList>
    </citation>
    <scope>NUCLEOTIDE SEQUENCE [MRNA]</scope>
    <scope>INTERACTION WITH CDKA-1</scope>
</reference>
<reference key="2">
    <citation type="journal article" date="2000" name="Nature">
        <title>Sequence and analysis of chromosome 3 of the plant Arabidopsis thaliana.</title>
        <authorList>
            <person name="Salanoubat M."/>
            <person name="Lemcke K."/>
            <person name="Rieger M."/>
            <person name="Ansorge W."/>
            <person name="Unseld M."/>
            <person name="Fartmann B."/>
            <person name="Valle G."/>
            <person name="Bloecker H."/>
            <person name="Perez-Alonso M."/>
            <person name="Obermaier B."/>
            <person name="Delseny M."/>
            <person name="Boutry M."/>
            <person name="Grivell L.A."/>
            <person name="Mache R."/>
            <person name="Puigdomenech P."/>
            <person name="De Simone V."/>
            <person name="Choisne N."/>
            <person name="Artiguenave F."/>
            <person name="Robert C."/>
            <person name="Brottier P."/>
            <person name="Wincker P."/>
            <person name="Cattolico L."/>
            <person name="Weissenbach J."/>
            <person name="Saurin W."/>
            <person name="Quetier F."/>
            <person name="Schaefer M."/>
            <person name="Mueller-Auer S."/>
            <person name="Gabel C."/>
            <person name="Fuchs M."/>
            <person name="Benes V."/>
            <person name="Wurmbach E."/>
            <person name="Drzonek H."/>
            <person name="Erfle H."/>
            <person name="Jordan N."/>
            <person name="Bangert S."/>
            <person name="Wiedelmann R."/>
            <person name="Kranz H."/>
            <person name="Voss H."/>
            <person name="Holland R."/>
            <person name="Brandt P."/>
            <person name="Nyakatura G."/>
            <person name="Vezzi A."/>
            <person name="D'Angelo M."/>
            <person name="Pallavicini A."/>
            <person name="Toppo S."/>
            <person name="Simionati B."/>
            <person name="Conrad A."/>
            <person name="Hornischer K."/>
            <person name="Kauer G."/>
            <person name="Loehnert T.-H."/>
            <person name="Nordsiek G."/>
            <person name="Reichelt J."/>
            <person name="Scharfe M."/>
            <person name="Schoen O."/>
            <person name="Bargues M."/>
            <person name="Terol J."/>
            <person name="Climent J."/>
            <person name="Navarro P."/>
            <person name="Collado C."/>
            <person name="Perez-Perez A."/>
            <person name="Ottenwaelder B."/>
            <person name="Duchemin D."/>
            <person name="Cooke R."/>
            <person name="Laudie M."/>
            <person name="Berger-Llauro C."/>
            <person name="Purnelle B."/>
            <person name="Masuy D."/>
            <person name="de Haan M."/>
            <person name="Maarse A.C."/>
            <person name="Alcaraz J.-P."/>
            <person name="Cottet A."/>
            <person name="Casacuberta E."/>
            <person name="Monfort A."/>
            <person name="Argiriou A."/>
            <person name="Flores M."/>
            <person name="Liguori R."/>
            <person name="Vitale D."/>
            <person name="Mannhaupt G."/>
            <person name="Haase D."/>
            <person name="Schoof H."/>
            <person name="Rudd S."/>
            <person name="Zaccaria P."/>
            <person name="Mewes H.-W."/>
            <person name="Mayer K.F.X."/>
            <person name="Kaul S."/>
            <person name="Town C.D."/>
            <person name="Koo H.L."/>
            <person name="Tallon L.J."/>
            <person name="Jenkins J."/>
            <person name="Rooney T."/>
            <person name="Rizzo M."/>
            <person name="Walts A."/>
            <person name="Utterback T."/>
            <person name="Fujii C.Y."/>
            <person name="Shea T.P."/>
            <person name="Creasy T.H."/>
            <person name="Haas B."/>
            <person name="Maiti R."/>
            <person name="Wu D."/>
            <person name="Peterson J."/>
            <person name="Van Aken S."/>
            <person name="Pai G."/>
            <person name="Militscher J."/>
            <person name="Sellers P."/>
            <person name="Gill J.E."/>
            <person name="Feldblyum T.V."/>
            <person name="Preuss D."/>
            <person name="Lin X."/>
            <person name="Nierman W.C."/>
            <person name="Salzberg S.L."/>
            <person name="White O."/>
            <person name="Venter J.C."/>
            <person name="Fraser C.M."/>
            <person name="Kaneko T."/>
            <person name="Nakamura Y."/>
            <person name="Sato S."/>
            <person name="Kato T."/>
            <person name="Asamizu E."/>
            <person name="Sasamoto S."/>
            <person name="Kimura T."/>
            <person name="Idesawa K."/>
            <person name="Kawashima K."/>
            <person name="Kishida Y."/>
            <person name="Kiyokawa C."/>
            <person name="Kohara M."/>
            <person name="Matsumoto M."/>
            <person name="Matsuno A."/>
            <person name="Muraki A."/>
            <person name="Nakayama S."/>
            <person name="Nakazaki N."/>
            <person name="Shinpo S."/>
            <person name="Takeuchi C."/>
            <person name="Wada T."/>
            <person name="Watanabe A."/>
            <person name="Yamada M."/>
            <person name="Yasuda M."/>
            <person name="Tabata S."/>
        </authorList>
    </citation>
    <scope>NUCLEOTIDE SEQUENCE [LARGE SCALE GENOMIC DNA]</scope>
    <source>
        <strain>cv. Columbia</strain>
    </source>
</reference>
<reference key="3">
    <citation type="journal article" date="2017" name="Plant J.">
        <title>Araport11: a complete reannotation of the Arabidopsis thaliana reference genome.</title>
        <authorList>
            <person name="Cheng C.Y."/>
            <person name="Krishnakumar V."/>
            <person name="Chan A.P."/>
            <person name="Thibaud-Nissen F."/>
            <person name="Schobel S."/>
            <person name="Town C.D."/>
        </authorList>
    </citation>
    <scope>GENOME REANNOTATION</scope>
    <source>
        <strain>cv. Columbia</strain>
    </source>
</reference>
<reference key="4">
    <citation type="submission" date="2004-09" db="EMBL/GenBank/DDBJ databases">
        <title>Large-scale analysis of RIKEN Arabidopsis full-length (RAFL) cDNAs.</title>
        <authorList>
            <person name="Totoki Y."/>
            <person name="Seki M."/>
            <person name="Ishida J."/>
            <person name="Nakajima M."/>
            <person name="Enju A."/>
            <person name="Kamiya A."/>
            <person name="Narusaka M."/>
            <person name="Shin-i T."/>
            <person name="Nakagawa M."/>
            <person name="Sakamoto N."/>
            <person name="Oishi K."/>
            <person name="Kohara Y."/>
            <person name="Kobayashi M."/>
            <person name="Toyoda A."/>
            <person name="Sakaki Y."/>
            <person name="Sakurai T."/>
            <person name="Iida K."/>
            <person name="Akiyama K."/>
            <person name="Satou M."/>
            <person name="Toyoda T."/>
            <person name="Konagaya A."/>
            <person name="Carninci P."/>
            <person name="Kawai J."/>
            <person name="Hayashizaki Y."/>
            <person name="Shinozaki K."/>
        </authorList>
    </citation>
    <scope>NUCLEOTIDE SEQUENCE [LARGE SCALE MRNA]</scope>
    <source>
        <strain>cv. Columbia</strain>
    </source>
</reference>
<reference key="5">
    <citation type="submission" date="2006-09" db="EMBL/GenBank/DDBJ databases">
        <title>Arabidopsis ORF clones.</title>
        <authorList>
            <person name="Quinitio C."/>
            <person name="Chen H."/>
            <person name="Kim C.J."/>
            <person name="Shinn P."/>
            <person name="Ecker J.R."/>
        </authorList>
    </citation>
    <scope>NUCLEOTIDE SEQUENCE [LARGE SCALE MRNA]</scope>
    <source>
        <strain>cv. Columbia</strain>
    </source>
</reference>
<reference key="6">
    <citation type="submission" date="2002-03" db="EMBL/GenBank/DDBJ databases">
        <title>Full-length cDNA from Arabidopsis thaliana.</title>
        <authorList>
            <person name="Brover V.V."/>
            <person name="Troukhan M.E."/>
            <person name="Alexandrov N.A."/>
            <person name="Lu Y.-P."/>
            <person name="Flavell R.B."/>
            <person name="Feldmann K.A."/>
        </authorList>
    </citation>
    <scope>NUCLEOTIDE SEQUENCE [LARGE SCALE MRNA]</scope>
</reference>
<reference key="7">
    <citation type="journal article" date="2001" name="Plant Cell">
        <title>Functional analysis of cyclin-dependent kinase inhibitors of Arabidopsis.</title>
        <authorList>
            <person name="de Veylder L."/>
            <person name="Beeckman T."/>
            <person name="Beemster G.T.S."/>
            <person name="Krols L."/>
            <person name="Terras F."/>
            <person name="Landrieu I."/>
            <person name="van der Schueren E."/>
            <person name="Maes S."/>
            <person name="Naudts M."/>
            <person name="Inze D."/>
        </authorList>
    </citation>
    <scope>FUNCTION</scope>
    <scope>TISSUE SPECIFICITY</scope>
    <scope>INTERACTION WITH CDKA-1</scope>
</reference>
<reference key="8">
    <citation type="journal article" date="2002" name="Plant J.">
        <title>Synchronous Arabidopsis suspension cultures for analysis of cell-cycle gene activity.</title>
        <authorList>
            <person name="Menges M."/>
            <person name="Murray J.A.H."/>
        </authorList>
    </citation>
    <scope>DEVELOPMENTAL STAGE</scope>
</reference>
<reference key="9">
    <citation type="journal article" date="2002" name="Plant Cell">
        <title>Auxin-mediated cell cycle activation during early lateral root initiation.</title>
        <authorList>
            <person name="Himanen K."/>
            <person name="Boucheron E."/>
            <person name="Vanneste S."/>
            <person name="de Almeida Engler J."/>
            <person name="Inze D."/>
            <person name="Beeckman T."/>
        </authorList>
    </citation>
    <scope>FUNCTION</scope>
    <scope>DEVELOPMENTAL STAGE</scope>
    <scope>INDUCTION</scope>
</reference>
<reference key="10">
    <citation type="journal article" date="2005" name="Plant Cell">
        <title>The cyclin-dependent kinase inhibitor KRP2 controls the onset of the endoreduplication cycle during Arabidopsis leaf development through inhibition of mitotic CDKA;1 kinase complexes.</title>
        <authorList>
            <person name="Verkest A."/>
            <person name="de Oliveira Manes C.L."/>
            <person name="Vercruysse S."/>
            <person name="Maes S."/>
            <person name="van der Schueren E."/>
            <person name="Beeckman T."/>
            <person name="Genschik P."/>
            <person name="Kuiper M."/>
            <person name="Inze D."/>
            <person name="de Veylder L."/>
        </authorList>
    </citation>
    <scope>FUNCTION</scope>
    <scope>DEVELOPMENTAL STAGE</scope>
    <scope>PHOSPHORYLATION</scope>
    <scope>INTERACTION WITH CDKA-1</scope>
</reference>
<reference key="11">
    <citation type="journal article" date="2006" name="FEBS Lett.">
        <title>Arabidopsis KRPs have distinct inhibitory activity toward cyclin D2-associated kinases, including plant-specific B-type cyclin-dependent kinase.</title>
        <authorList>
            <person name="Nakai T."/>
            <person name="Kato K."/>
            <person name="Shinmyo A."/>
            <person name="Sekine M."/>
        </authorList>
    </citation>
    <scope>FUNCTION</scope>
</reference>
<reference key="12">
    <citation type="journal article" date="2007" name="Plant Cell Rep.">
        <title>Arabidopsis cyclin-dependent kinase inhibitors are nuclear-localized and show different localization patterns within the nucleoplasm.</title>
        <authorList>
            <person name="Bird D.A."/>
            <person name="Buruiana M.M."/>
            <person name="Zhou Y."/>
            <person name="Fowke L.C."/>
            <person name="Wang H."/>
        </authorList>
    </citation>
    <scope>SUBCELLULAR LOCATION</scope>
</reference>
<name>KRP2_ARATH</name>
<sequence length="209" mass="24037">MAAVRRRERDVVEENGVTTTTVKRRKMEEEVDLVESRIILSPCVQATNRGGIVARNSAGASETSVVIVRRRDSPPVEEQCQIEEEDSSVSCCSTSEEKSKRRIEFVDLEENNGDDRETETSWIYDDLNKSEESMNMDSSSVAVEDVESRRRLRKSLHETVKEAELEDFFQVAEKDLRNKLLECSMKYNFDFEKDEPLGGGRYEWVKLNP</sequence>